<comment type="function">
    <text evidence="1">Required to facilitate the formation of correct disulfide bonds in some periplasmic proteins and for the assembly of the periplasmic c-type cytochromes. Acts by transferring electrons from cytoplasmic thioredoxin to the periplasm. This transfer involves a cascade of disulfide bond formation and reduction steps (By similarity).</text>
</comment>
<comment type="catalytic activity">
    <reaction>
        <text>[protein]-dithiol + NAD(+) = [protein]-disulfide + NADH + H(+)</text>
        <dbReference type="Rhea" id="RHEA:18749"/>
        <dbReference type="Rhea" id="RHEA-COMP:10593"/>
        <dbReference type="Rhea" id="RHEA-COMP:10594"/>
        <dbReference type="ChEBI" id="CHEBI:15378"/>
        <dbReference type="ChEBI" id="CHEBI:29950"/>
        <dbReference type="ChEBI" id="CHEBI:50058"/>
        <dbReference type="ChEBI" id="CHEBI:57540"/>
        <dbReference type="ChEBI" id="CHEBI:57945"/>
        <dbReference type="EC" id="1.8.1.8"/>
    </reaction>
</comment>
<comment type="catalytic activity">
    <reaction>
        <text>[protein]-dithiol + NADP(+) = [protein]-disulfide + NADPH + H(+)</text>
        <dbReference type="Rhea" id="RHEA:18753"/>
        <dbReference type="Rhea" id="RHEA-COMP:10593"/>
        <dbReference type="Rhea" id="RHEA-COMP:10594"/>
        <dbReference type="ChEBI" id="CHEBI:15378"/>
        <dbReference type="ChEBI" id="CHEBI:29950"/>
        <dbReference type="ChEBI" id="CHEBI:50058"/>
        <dbReference type="ChEBI" id="CHEBI:57783"/>
        <dbReference type="ChEBI" id="CHEBI:58349"/>
        <dbReference type="EC" id="1.8.1.8"/>
    </reaction>
</comment>
<comment type="subcellular location">
    <subcellularLocation>
        <location evidence="1">Cell inner membrane</location>
        <topology evidence="1">Multi-pass membrane protein</topology>
    </subcellularLocation>
</comment>
<comment type="similarity">
    <text evidence="3">Belongs to the thioredoxin family. DsbD subfamily.</text>
</comment>
<accession>Q9PHR3</accession>
<accession>Q0PAR4</accession>
<protein>
    <recommendedName>
        <fullName>Thiol:disulfide interchange protein DsbD</fullName>
        <ecNumber>1.8.1.8</ecNumber>
    </recommendedName>
    <alternativeName>
        <fullName>Protein-disulfide reductase</fullName>
        <shortName>Disulfide reductase</shortName>
    </alternativeName>
</protein>
<gene>
    <name type="primary">dsbD</name>
    <name type="ordered locus">Cj0603c</name>
</gene>
<organism>
    <name type="scientific">Campylobacter jejuni subsp. jejuni serotype O:2 (strain ATCC 700819 / NCTC 11168)</name>
    <dbReference type="NCBI Taxonomy" id="192222"/>
    <lineage>
        <taxon>Bacteria</taxon>
        <taxon>Pseudomonadati</taxon>
        <taxon>Campylobacterota</taxon>
        <taxon>Epsilonproteobacteria</taxon>
        <taxon>Campylobacterales</taxon>
        <taxon>Campylobacteraceae</taxon>
        <taxon>Campylobacter</taxon>
    </lineage>
</organism>
<name>DSBD_CAMJE</name>
<keyword id="KW-0997">Cell inner membrane</keyword>
<keyword id="KW-1003">Cell membrane</keyword>
<keyword id="KW-0201">Cytochrome c-type biogenesis</keyword>
<keyword id="KW-1015">Disulfide bond</keyword>
<keyword id="KW-0249">Electron transport</keyword>
<keyword id="KW-0472">Membrane</keyword>
<keyword id="KW-0520">NAD</keyword>
<keyword id="KW-0560">Oxidoreductase</keyword>
<keyword id="KW-0676">Redox-active center</keyword>
<keyword id="KW-1185">Reference proteome</keyword>
<keyword id="KW-0732">Signal</keyword>
<keyword id="KW-0812">Transmembrane</keyword>
<keyword id="KW-1133">Transmembrane helix</keyword>
<keyword id="KW-0813">Transport</keyword>
<sequence length="567" mass="63786">MRIFGIILLSFCLCFASILSLNEAFNVKSNSYNNSISIDIELGKDIYLYSNKLKLYINEKDISSLINLPQSSTRGNENVYYQKLNLALPNLLLERFAKNTTNLIKLEFQGCSEQGLCYNPQTWYFDLISKKDAFEISKPYKAQKTDKKTKIESEESSIANFLATDNFFWILLSFFGYGLLLSLTPCILPMIPILSSLIVAKSNAKFSKKYSFFLSFIYVFFMSLAYAIAGVIASFLGASIQGILQKPIILILFALIFIAFAFAMFGAFRFELPLRFQTFIHKKSEKGKGVVGIAIMGFLSALIVGPCVAAPLAGALIYIANTGNALLGGSALFIMSFGMGIPLLFIGLGLGFIKPGFWMEKVKIFFGFVMLAMAIWILSRIIEENYILIAYGILGVFFSVFMGIFEKSFTIISKIKKSILILILAYSLSIFLGGLFGAKNFLNPLNFNTISASKHALSYDYINNFEQLKQEIQTNTKPIMLDFTASWCENCKLLDELTFSDERIIQKMQNYKLIKVDVSENNNEQIKTMKEFNVFGPPVLIFFENGKEKLKITGFISADDLLKKIEP</sequence>
<reference key="1">
    <citation type="journal article" date="2000" name="Nature">
        <title>The genome sequence of the food-borne pathogen Campylobacter jejuni reveals hypervariable sequences.</title>
        <authorList>
            <person name="Parkhill J."/>
            <person name="Wren B.W."/>
            <person name="Mungall K.L."/>
            <person name="Ketley J.M."/>
            <person name="Churcher C.M."/>
            <person name="Basham D."/>
            <person name="Chillingworth T."/>
            <person name="Davies R.M."/>
            <person name="Feltwell T."/>
            <person name="Holroyd S."/>
            <person name="Jagels K."/>
            <person name="Karlyshev A.V."/>
            <person name="Moule S."/>
            <person name="Pallen M.J."/>
            <person name="Penn C.W."/>
            <person name="Quail M.A."/>
            <person name="Rajandream M.A."/>
            <person name="Rutherford K.M."/>
            <person name="van Vliet A.H.M."/>
            <person name="Whitehead S."/>
            <person name="Barrell B.G."/>
        </authorList>
    </citation>
    <scope>NUCLEOTIDE SEQUENCE [LARGE SCALE GENOMIC DNA]</scope>
    <source>
        <strain>ATCC 700819 / NCTC 11168</strain>
    </source>
</reference>
<evidence type="ECO:0000250" key="1"/>
<evidence type="ECO:0000255" key="2"/>
<evidence type="ECO:0000305" key="3"/>
<dbReference type="EC" id="1.8.1.8"/>
<dbReference type="EMBL" id="AL111168">
    <property type="protein sequence ID" value="CAL34749.1"/>
    <property type="molecule type" value="Genomic_DNA"/>
</dbReference>
<dbReference type="PIR" id="B81408">
    <property type="entry name" value="B81408"/>
</dbReference>
<dbReference type="RefSeq" id="WP_002852245.1">
    <property type="nucleotide sequence ID" value="NZ_SZUC01000002.1"/>
</dbReference>
<dbReference type="RefSeq" id="YP_002344033.1">
    <property type="nucleotide sequence ID" value="NC_002163.1"/>
</dbReference>
<dbReference type="SMR" id="Q9PHR3"/>
<dbReference type="IntAct" id="Q9PHR3">
    <property type="interactions" value="3"/>
</dbReference>
<dbReference type="STRING" id="192222.Cj0603c"/>
<dbReference type="PaxDb" id="192222-Cj0603c"/>
<dbReference type="EnsemblBacteria" id="CAL34749">
    <property type="protein sequence ID" value="CAL34749"/>
    <property type="gene ID" value="Cj0603c"/>
</dbReference>
<dbReference type="GeneID" id="904931"/>
<dbReference type="KEGG" id="cje:Cj0603c"/>
<dbReference type="PATRIC" id="fig|192222.6.peg.595"/>
<dbReference type="eggNOG" id="COG4232">
    <property type="taxonomic scope" value="Bacteria"/>
</dbReference>
<dbReference type="HOGENOM" id="CLU_014657_3_0_7"/>
<dbReference type="OrthoDB" id="9811036at2"/>
<dbReference type="Proteomes" id="UP000000799">
    <property type="component" value="Chromosome"/>
</dbReference>
<dbReference type="GO" id="GO:0005886">
    <property type="term" value="C:plasma membrane"/>
    <property type="evidence" value="ECO:0007669"/>
    <property type="project" value="UniProtKB-SubCell"/>
</dbReference>
<dbReference type="GO" id="GO:0009055">
    <property type="term" value="F:electron transfer activity"/>
    <property type="evidence" value="ECO:0007669"/>
    <property type="project" value="UniProtKB-UniRule"/>
</dbReference>
<dbReference type="GO" id="GO:0047134">
    <property type="term" value="F:protein-disulfide reductase [NAD(P)H] activity"/>
    <property type="evidence" value="ECO:0007669"/>
    <property type="project" value="UniProtKB-UniRule"/>
</dbReference>
<dbReference type="GO" id="GO:0045454">
    <property type="term" value="P:cell redox homeostasis"/>
    <property type="evidence" value="ECO:0007669"/>
    <property type="project" value="TreeGrafter"/>
</dbReference>
<dbReference type="GO" id="GO:0017004">
    <property type="term" value="P:cytochrome complex assembly"/>
    <property type="evidence" value="ECO:0007669"/>
    <property type="project" value="UniProtKB-UniRule"/>
</dbReference>
<dbReference type="CDD" id="cd02953">
    <property type="entry name" value="DsbDgamma"/>
    <property type="match status" value="1"/>
</dbReference>
<dbReference type="Gene3D" id="3.40.30.10">
    <property type="entry name" value="Glutaredoxin"/>
    <property type="match status" value="1"/>
</dbReference>
<dbReference type="Gene3D" id="2.60.40.1250">
    <property type="entry name" value="Thiol:disulfide interchange protein DsbD, N-terminal domain"/>
    <property type="match status" value="1"/>
</dbReference>
<dbReference type="HAMAP" id="MF_00399">
    <property type="entry name" value="DbsD"/>
    <property type="match status" value="1"/>
</dbReference>
<dbReference type="InterPro" id="IPR003834">
    <property type="entry name" value="Cyt_c_assmbl_TM_dom"/>
</dbReference>
<dbReference type="InterPro" id="IPR035671">
    <property type="entry name" value="DsbD_gamma"/>
</dbReference>
<dbReference type="InterPro" id="IPR028250">
    <property type="entry name" value="DsbDN"/>
</dbReference>
<dbReference type="InterPro" id="IPR036929">
    <property type="entry name" value="DsbDN_sf"/>
</dbReference>
<dbReference type="InterPro" id="IPR022910">
    <property type="entry name" value="Thiol_diS_interchange_DbsD"/>
</dbReference>
<dbReference type="InterPro" id="IPR036249">
    <property type="entry name" value="Thioredoxin-like_sf"/>
</dbReference>
<dbReference type="InterPro" id="IPR013766">
    <property type="entry name" value="Thioredoxin_domain"/>
</dbReference>
<dbReference type="NCBIfam" id="NF001419">
    <property type="entry name" value="PRK00293.1"/>
    <property type="match status" value="1"/>
</dbReference>
<dbReference type="PANTHER" id="PTHR32234">
    <property type="entry name" value="THIOL:DISULFIDE INTERCHANGE PROTEIN DSBD"/>
    <property type="match status" value="1"/>
</dbReference>
<dbReference type="PANTHER" id="PTHR32234:SF0">
    <property type="entry name" value="THIOL:DISULFIDE INTERCHANGE PROTEIN DSBD"/>
    <property type="match status" value="1"/>
</dbReference>
<dbReference type="Pfam" id="PF11412">
    <property type="entry name" value="DsbD_N"/>
    <property type="match status" value="1"/>
</dbReference>
<dbReference type="Pfam" id="PF02683">
    <property type="entry name" value="DsbD_TM"/>
    <property type="match status" value="1"/>
</dbReference>
<dbReference type="Pfam" id="PF00085">
    <property type="entry name" value="Thioredoxin"/>
    <property type="match status" value="1"/>
</dbReference>
<dbReference type="SUPFAM" id="SSF74863">
    <property type="entry name" value="Thiol:disulfide interchange protein DsbD, N-terminal domain (DsbD-alpha)"/>
    <property type="match status" value="1"/>
</dbReference>
<dbReference type="SUPFAM" id="SSF52833">
    <property type="entry name" value="Thioredoxin-like"/>
    <property type="match status" value="1"/>
</dbReference>
<dbReference type="PROSITE" id="PS51352">
    <property type="entry name" value="THIOREDOXIN_2"/>
    <property type="match status" value="1"/>
</dbReference>
<feature type="signal peptide" evidence="2">
    <location>
        <begin position="1"/>
        <end position="16"/>
    </location>
</feature>
<feature type="chain" id="PRO_0000007372" description="Thiol:disulfide interchange protein DsbD">
    <location>
        <begin position="17"/>
        <end position="567"/>
    </location>
</feature>
<feature type="topological domain" description="Periplasmic" evidence="2">
    <location>
        <begin position="17"/>
        <end position="166"/>
    </location>
</feature>
<feature type="transmembrane region" description="Helical" evidence="2">
    <location>
        <begin position="167"/>
        <end position="187"/>
    </location>
</feature>
<feature type="topological domain" description="Cytoplasmic" evidence="2">
    <location>
        <begin position="188"/>
        <end position="211"/>
    </location>
</feature>
<feature type="transmembrane region" description="Helical" evidence="2">
    <location>
        <begin position="212"/>
        <end position="232"/>
    </location>
</feature>
<feature type="topological domain" description="Periplasmic" evidence="2">
    <location>
        <begin position="233"/>
        <end position="247"/>
    </location>
</feature>
<feature type="transmembrane region" description="Helical" evidence="2">
    <location>
        <begin position="248"/>
        <end position="268"/>
    </location>
</feature>
<feature type="topological domain" description="Cytoplasmic" evidence="2">
    <location>
        <begin position="269"/>
        <end position="289"/>
    </location>
</feature>
<feature type="transmembrane region" description="Helical" evidence="2">
    <location>
        <begin position="290"/>
        <end position="310"/>
    </location>
</feature>
<feature type="topological domain" description="Periplasmic" evidence="2">
    <location>
        <begin position="311"/>
        <end position="332"/>
    </location>
</feature>
<feature type="transmembrane region" description="Helical" evidence="2">
    <location>
        <begin position="333"/>
        <end position="353"/>
    </location>
</feature>
<feature type="topological domain" description="Cytoplasmic" evidence="2">
    <location>
        <begin position="354"/>
        <end position="361"/>
    </location>
</feature>
<feature type="transmembrane region" description="Helical" evidence="2">
    <location>
        <begin position="362"/>
        <end position="382"/>
    </location>
</feature>
<feature type="topological domain" description="Periplasmic" evidence="2">
    <location>
        <begin position="383"/>
        <end position="385"/>
    </location>
</feature>
<feature type="transmembrane region" description="Helical" evidence="2">
    <location>
        <begin position="386"/>
        <end position="406"/>
    </location>
</feature>
<feature type="topological domain" description="Cytoplasmic" evidence="2">
    <location>
        <begin position="407"/>
        <end position="417"/>
    </location>
</feature>
<feature type="transmembrane region" description="Helical" evidence="2">
    <location>
        <begin position="418"/>
        <end position="438"/>
    </location>
</feature>
<feature type="topological domain" description="Periplasmic" evidence="2">
    <location>
        <begin position="439"/>
        <end position="567"/>
    </location>
</feature>
<feature type="domain" description="Thioredoxin">
    <location>
        <begin position="430"/>
        <end position="567"/>
    </location>
</feature>
<feature type="disulfide bond" description="Redox-active" evidence="1">
    <location>
        <begin position="111"/>
        <end position="117"/>
    </location>
</feature>
<feature type="disulfide bond" description="Redox-active" evidence="1">
    <location>
        <begin position="186"/>
        <end position="307"/>
    </location>
</feature>
<feature type="disulfide bond" description="Redox-active" evidence="1">
    <location>
        <begin position="488"/>
        <end position="491"/>
    </location>
</feature>
<proteinExistence type="inferred from homology"/>